<evidence type="ECO:0000255" key="1">
    <source>
        <dbReference type="HAMAP-Rule" id="MF_01519"/>
    </source>
</evidence>
<proteinExistence type="inferred from homology"/>
<reference key="1">
    <citation type="journal article" date="2009" name="J. Bacteriol.">
        <title>Complete genome sequence and comparative genome analysis of enteropathogenic Escherichia coli O127:H6 strain E2348/69.</title>
        <authorList>
            <person name="Iguchi A."/>
            <person name="Thomson N.R."/>
            <person name="Ogura Y."/>
            <person name="Saunders D."/>
            <person name="Ooka T."/>
            <person name="Henderson I.R."/>
            <person name="Harris D."/>
            <person name="Asadulghani M."/>
            <person name="Kurokawa K."/>
            <person name="Dean P."/>
            <person name="Kenny B."/>
            <person name="Quail M.A."/>
            <person name="Thurston S."/>
            <person name="Dougan G."/>
            <person name="Hayashi T."/>
            <person name="Parkhill J."/>
            <person name="Frankel G."/>
        </authorList>
    </citation>
    <scope>NUCLEOTIDE SEQUENCE [LARGE SCALE GENOMIC DNA]</scope>
    <source>
        <strain>E2348/69 / EPEC</strain>
    </source>
</reference>
<sequence>MYDNLKSLGITNPEEIDRYSLRQEANNDILKIYFQKDKGEFFAKSVKFKYPRQRKTVVADGVGQGYKEVQEISPNLRYIIDELDQICQRDRSEVDLKRKILDDLRHLESVVTNKISEIEADLEKLTRK</sequence>
<dbReference type="EMBL" id="FM180568">
    <property type="protein sequence ID" value="CAS07718.1"/>
    <property type="molecule type" value="Genomic_DNA"/>
</dbReference>
<dbReference type="RefSeq" id="WP_000272188.1">
    <property type="nucleotide sequence ID" value="NC_011601.1"/>
</dbReference>
<dbReference type="SMR" id="B7UIL0"/>
<dbReference type="KEGG" id="ecg:E2348C_0170"/>
<dbReference type="HOGENOM" id="CLU_136774_0_0_6"/>
<dbReference type="Proteomes" id="UP000008205">
    <property type="component" value="Chromosome"/>
</dbReference>
<dbReference type="HAMAP" id="MF_01519">
    <property type="entry name" value="UPF0325"/>
    <property type="match status" value="1"/>
</dbReference>
<dbReference type="InterPro" id="IPR020911">
    <property type="entry name" value="UPF0325"/>
</dbReference>
<dbReference type="NCBIfam" id="NF010213">
    <property type="entry name" value="PRK13677.1"/>
    <property type="match status" value="1"/>
</dbReference>
<dbReference type="Pfam" id="PF11944">
    <property type="entry name" value="DUF3461"/>
    <property type="match status" value="1"/>
</dbReference>
<protein>
    <recommendedName>
        <fullName evidence="1">UPF0325 protein YaeH</fullName>
    </recommendedName>
</protein>
<feature type="chain" id="PRO_1000185092" description="UPF0325 protein YaeH">
    <location>
        <begin position="1"/>
        <end position="128"/>
    </location>
</feature>
<gene>
    <name evidence="1" type="primary">yaeH</name>
    <name type="ordered locus">E2348C_0170</name>
</gene>
<comment type="similarity">
    <text evidence="1">Belongs to the UPF0325 family.</text>
</comment>
<organism>
    <name type="scientific">Escherichia coli O127:H6 (strain E2348/69 / EPEC)</name>
    <dbReference type="NCBI Taxonomy" id="574521"/>
    <lineage>
        <taxon>Bacteria</taxon>
        <taxon>Pseudomonadati</taxon>
        <taxon>Pseudomonadota</taxon>
        <taxon>Gammaproteobacteria</taxon>
        <taxon>Enterobacterales</taxon>
        <taxon>Enterobacteriaceae</taxon>
        <taxon>Escherichia</taxon>
    </lineage>
</organism>
<keyword id="KW-1185">Reference proteome</keyword>
<accession>B7UIL0</accession>
<name>YAEH_ECO27</name>